<dbReference type="EMBL" id="AE008692">
    <property type="protein sequence ID" value="AAV90605.2"/>
    <property type="molecule type" value="Genomic_DNA"/>
</dbReference>
<dbReference type="SMR" id="Q5NL05"/>
<dbReference type="STRING" id="264203.ZMO1981"/>
<dbReference type="KEGG" id="zmo:ZMO1981"/>
<dbReference type="eggNOG" id="COG0445">
    <property type="taxonomic scope" value="Bacteria"/>
</dbReference>
<dbReference type="HOGENOM" id="CLU_007831_2_2_5"/>
<dbReference type="Proteomes" id="UP000001173">
    <property type="component" value="Chromosome"/>
</dbReference>
<dbReference type="GO" id="GO:0005829">
    <property type="term" value="C:cytosol"/>
    <property type="evidence" value="ECO:0007669"/>
    <property type="project" value="TreeGrafter"/>
</dbReference>
<dbReference type="GO" id="GO:0050660">
    <property type="term" value="F:flavin adenine dinucleotide binding"/>
    <property type="evidence" value="ECO:0007669"/>
    <property type="project" value="UniProtKB-UniRule"/>
</dbReference>
<dbReference type="GO" id="GO:0030488">
    <property type="term" value="P:tRNA methylation"/>
    <property type="evidence" value="ECO:0007669"/>
    <property type="project" value="TreeGrafter"/>
</dbReference>
<dbReference type="GO" id="GO:0002098">
    <property type="term" value="P:tRNA wobble uridine modification"/>
    <property type="evidence" value="ECO:0007669"/>
    <property type="project" value="InterPro"/>
</dbReference>
<dbReference type="FunFam" id="3.50.50.60:FF:000002">
    <property type="entry name" value="tRNA uridine 5-carboxymethylaminomethyl modification enzyme MnmG"/>
    <property type="match status" value="1"/>
</dbReference>
<dbReference type="Gene3D" id="3.50.50.60">
    <property type="entry name" value="FAD/NAD(P)-binding domain"/>
    <property type="match status" value="2"/>
</dbReference>
<dbReference type="Gene3D" id="1.10.150.570">
    <property type="entry name" value="GidA associated domain, C-terminal subdomain"/>
    <property type="match status" value="1"/>
</dbReference>
<dbReference type="HAMAP" id="MF_00129">
    <property type="entry name" value="MnmG_GidA"/>
    <property type="match status" value="1"/>
</dbReference>
<dbReference type="InterPro" id="IPR036188">
    <property type="entry name" value="FAD/NAD-bd_sf"/>
</dbReference>
<dbReference type="InterPro" id="IPR049312">
    <property type="entry name" value="GIDA_C_N"/>
</dbReference>
<dbReference type="InterPro" id="IPR004416">
    <property type="entry name" value="MnmG"/>
</dbReference>
<dbReference type="InterPro" id="IPR002218">
    <property type="entry name" value="MnmG-rel"/>
</dbReference>
<dbReference type="InterPro" id="IPR020595">
    <property type="entry name" value="MnmG-rel_CS"/>
</dbReference>
<dbReference type="InterPro" id="IPR026904">
    <property type="entry name" value="MnmG_C"/>
</dbReference>
<dbReference type="InterPro" id="IPR047001">
    <property type="entry name" value="MnmG_C_subdom"/>
</dbReference>
<dbReference type="InterPro" id="IPR044920">
    <property type="entry name" value="MnmG_C_subdom_sf"/>
</dbReference>
<dbReference type="InterPro" id="IPR040131">
    <property type="entry name" value="MnmG_N"/>
</dbReference>
<dbReference type="NCBIfam" id="TIGR00136">
    <property type="entry name" value="mnmG_gidA"/>
    <property type="match status" value="1"/>
</dbReference>
<dbReference type="PANTHER" id="PTHR11806">
    <property type="entry name" value="GLUCOSE INHIBITED DIVISION PROTEIN A"/>
    <property type="match status" value="1"/>
</dbReference>
<dbReference type="PANTHER" id="PTHR11806:SF0">
    <property type="entry name" value="PROTEIN MTO1 HOMOLOG, MITOCHONDRIAL"/>
    <property type="match status" value="1"/>
</dbReference>
<dbReference type="Pfam" id="PF01134">
    <property type="entry name" value="GIDA"/>
    <property type="match status" value="1"/>
</dbReference>
<dbReference type="Pfam" id="PF21680">
    <property type="entry name" value="GIDA_C_1st"/>
    <property type="match status" value="1"/>
</dbReference>
<dbReference type="Pfam" id="PF13932">
    <property type="entry name" value="SAM_GIDA_C"/>
    <property type="match status" value="1"/>
</dbReference>
<dbReference type="SMART" id="SM01228">
    <property type="entry name" value="GIDA_assoc_3"/>
    <property type="match status" value="1"/>
</dbReference>
<dbReference type="SUPFAM" id="SSF51905">
    <property type="entry name" value="FAD/NAD(P)-binding domain"/>
    <property type="match status" value="1"/>
</dbReference>
<dbReference type="PROSITE" id="PS01280">
    <property type="entry name" value="GIDA_1"/>
    <property type="match status" value="1"/>
</dbReference>
<keyword id="KW-0963">Cytoplasm</keyword>
<keyword id="KW-0274">FAD</keyword>
<keyword id="KW-0285">Flavoprotein</keyword>
<keyword id="KW-0520">NAD</keyword>
<keyword id="KW-1185">Reference proteome</keyword>
<keyword id="KW-0819">tRNA processing</keyword>
<comment type="function">
    <text evidence="1">NAD-binding protein involved in the addition of a carboxymethylaminomethyl (cmnm) group at the wobble position (U34) of certain tRNAs, forming tRNA-cmnm(5)s(2)U34.</text>
</comment>
<comment type="cofactor">
    <cofactor evidence="1">
        <name>FAD</name>
        <dbReference type="ChEBI" id="CHEBI:57692"/>
    </cofactor>
</comment>
<comment type="subunit">
    <text evidence="1">Homodimer. Heterotetramer of two MnmE and two MnmG subunits.</text>
</comment>
<comment type="subcellular location">
    <subcellularLocation>
        <location evidence="1">Cytoplasm</location>
    </subcellularLocation>
</comment>
<comment type="similarity">
    <text evidence="1">Belongs to the MnmG family.</text>
</comment>
<feature type="chain" id="PRO_0000345361" description="tRNA uridine 5-carboxymethylaminomethyl modification enzyme MnmG">
    <location>
        <begin position="1"/>
        <end position="621"/>
    </location>
</feature>
<feature type="binding site" evidence="1">
    <location>
        <begin position="17"/>
        <end position="22"/>
    </location>
    <ligand>
        <name>FAD</name>
        <dbReference type="ChEBI" id="CHEBI:57692"/>
    </ligand>
</feature>
<feature type="binding site" evidence="1">
    <location>
        <begin position="276"/>
        <end position="290"/>
    </location>
    <ligand>
        <name>NAD(+)</name>
        <dbReference type="ChEBI" id="CHEBI:57540"/>
    </ligand>
</feature>
<sequence length="621" mass="67383">MIFIPVMKEFFDIVVIGGGHAGCEAAAVAARMGAKTALVTMDSEQIGAMSCNPAIGGLGKGHLVREIDAWDGLMPHAADYAAIHYRMLNRSKGSAVQGPRIQADRNRYKKAIQTALKEQAHLTIIEGMAESFQMDKGKVKAVLLADGRPLKTESVVLTTGTFLDAWLFCGEKKWRGGRIGEQPSIGLAEQLKALDLPLGRLKTGTPARLDGRTIDWARLQRQPSDEDAWTMASYGAGRVAPQIACSLTRSNQKTHDIIRAGLDRSPLFSGAIEGRGPRYCPSIEDKIMKFGDRDGHQIFLEPEGLDTPLIYPNGISTSLPEDVQQAFINSIEGLENTKIVQFGYAVEYEFIDPRSLTHQLELKALKSVFCAGQINGTTGYEEAAAQGLVAGISAACAVAGKAPPVFDRRNSYIGVMIDDLVLQGVTEPYRMLTARAEYRLGLRADNAVTRLSGQAKAFGALGAEMTDFVTKRLAEREKCQKLLEKAASSRDMQAVGANVTEGASHSLFEWLRFPAVTRQHLEALIPELTEFSDAVVSEIIDDGRYAPYLERQDAELARLAGHDNMPLPAELDYATIAGLSNEMVEKFSAARPPDMASASRVRGVTPAALAAILIHAKKVTL</sequence>
<organism>
    <name type="scientific">Zymomonas mobilis subsp. mobilis (strain ATCC 31821 / ZM4 / CP4)</name>
    <dbReference type="NCBI Taxonomy" id="264203"/>
    <lineage>
        <taxon>Bacteria</taxon>
        <taxon>Pseudomonadati</taxon>
        <taxon>Pseudomonadota</taxon>
        <taxon>Alphaproteobacteria</taxon>
        <taxon>Sphingomonadales</taxon>
        <taxon>Zymomonadaceae</taxon>
        <taxon>Zymomonas</taxon>
    </lineage>
</organism>
<accession>Q5NL05</accession>
<gene>
    <name evidence="1" type="primary">mnmG</name>
    <name evidence="1" type="synonym">gidA</name>
    <name type="ordered locus">ZMO1981</name>
</gene>
<name>MNMG_ZYMMO</name>
<reference key="1">
    <citation type="journal article" date="2005" name="Nat. Biotechnol.">
        <title>The genome sequence of the ethanologenic bacterium Zymomonas mobilis ZM4.</title>
        <authorList>
            <person name="Seo J.-S."/>
            <person name="Chong H."/>
            <person name="Park H.S."/>
            <person name="Yoon K.-O."/>
            <person name="Jung C."/>
            <person name="Kim J.J."/>
            <person name="Hong J.H."/>
            <person name="Kim H."/>
            <person name="Kim J.-H."/>
            <person name="Kil J.-I."/>
            <person name="Park C.J."/>
            <person name="Oh H.-M."/>
            <person name="Lee J.-S."/>
            <person name="Jin S.-J."/>
            <person name="Um H.-W."/>
            <person name="Lee H.-J."/>
            <person name="Oh S.-J."/>
            <person name="Kim J.Y."/>
            <person name="Kang H.L."/>
            <person name="Lee S.Y."/>
            <person name="Lee K.J."/>
            <person name="Kang H.S."/>
        </authorList>
    </citation>
    <scope>NUCLEOTIDE SEQUENCE [LARGE SCALE GENOMIC DNA]</scope>
    <source>
        <strain>ATCC 31821 / ZM4 / CP4</strain>
    </source>
</reference>
<evidence type="ECO:0000255" key="1">
    <source>
        <dbReference type="HAMAP-Rule" id="MF_00129"/>
    </source>
</evidence>
<protein>
    <recommendedName>
        <fullName evidence="1">tRNA uridine 5-carboxymethylaminomethyl modification enzyme MnmG</fullName>
    </recommendedName>
    <alternativeName>
        <fullName evidence="1">Glucose-inhibited division protein A</fullName>
    </alternativeName>
</protein>
<proteinExistence type="inferred from homology"/>